<comment type="function">
    <text evidence="2">Component of the ubiquinol-cytochrome c reductase complex (complex III or cytochrome b-c1 complex) that is part of the mitochondrial respiratory chain. The b-c1 complex mediates electron transfer from ubiquinol to cytochrome c. Contributes to the generation of a proton gradient across the mitochondrial membrane that is then used for ATP synthesis.</text>
</comment>
<comment type="cofactor">
    <cofactor evidence="2">
        <name>heme b</name>
        <dbReference type="ChEBI" id="CHEBI:60344"/>
    </cofactor>
    <text evidence="2">Binds 2 heme b groups non-covalently.</text>
</comment>
<comment type="subunit">
    <text evidence="2">The cytochrome bc1 complex contains 11 subunits: 3 respiratory subunits (MT-CYB, CYC1 and UQCRFS1), 2 core proteins (UQCRC1 and UQCRC2) and 6 low-molecular weight proteins (UQCRH/QCR6, UQCRB/QCR7, UQCRQ/QCR8, UQCR10/QCR9, UQCR11/QCR10 and a cleavage product of UQCRFS1). This cytochrome bc1 complex then forms a dimer.</text>
</comment>
<comment type="subcellular location">
    <subcellularLocation>
        <location evidence="2">Mitochondrion inner membrane</location>
        <topology evidence="2">Multi-pass membrane protein</topology>
    </subcellularLocation>
</comment>
<comment type="miscellaneous">
    <text evidence="1">Heme 1 (or BL or b562) is low-potential and absorbs at about 562 nm, and heme 2 (or BH or b566) is high-potential and absorbs at about 566 nm.</text>
</comment>
<comment type="similarity">
    <text evidence="3 4">Belongs to the cytochrome b family.</text>
</comment>
<comment type="caution">
    <text evidence="2">The full-length protein contains only eight transmembrane helices, not nine as predicted by bioinformatics tools.</text>
</comment>
<gene>
    <name type="primary">MT-CYB</name>
    <name type="synonym">COB</name>
    <name type="synonym">CYTB</name>
    <name type="synonym">MTCYB</name>
</gene>
<organism>
    <name type="scientific">Alexandromys kikuchii</name>
    <name type="common">Taiwan vole</name>
    <name type="synonym">Microtus kikuchii</name>
    <dbReference type="NCBI Taxonomy" id="3369700"/>
    <lineage>
        <taxon>Eukaryota</taxon>
        <taxon>Metazoa</taxon>
        <taxon>Chordata</taxon>
        <taxon>Craniata</taxon>
        <taxon>Vertebrata</taxon>
        <taxon>Euteleostomi</taxon>
        <taxon>Mammalia</taxon>
        <taxon>Eutheria</taxon>
        <taxon>Euarchontoglires</taxon>
        <taxon>Glires</taxon>
        <taxon>Rodentia</taxon>
        <taxon>Myomorpha</taxon>
        <taxon>Muroidea</taxon>
        <taxon>Cricetidae</taxon>
        <taxon>Arvicolinae</taxon>
        <taxon>Alexandromys</taxon>
    </lineage>
</organism>
<feature type="chain" id="PRO_0000257958" description="Cytochrome b">
    <location>
        <begin position="1"/>
        <end position="380"/>
    </location>
</feature>
<feature type="transmembrane region" description="Helical" evidence="2">
    <location>
        <begin position="33"/>
        <end position="53"/>
    </location>
</feature>
<feature type="transmembrane region" description="Helical" evidence="2">
    <location>
        <begin position="77"/>
        <end position="98"/>
    </location>
</feature>
<feature type="transmembrane region" description="Helical" evidence="2">
    <location>
        <begin position="113"/>
        <end position="133"/>
    </location>
</feature>
<feature type="transmembrane region" description="Helical" evidence="2">
    <location>
        <begin position="178"/>
        <end position="198"/>
    </location>
</feature>
<feature type="transmembrane region" description="Helical" evidence="2">
    <location>
        <begin position="226"/>
        <end position="246"/>
    </location>
</feature>
<feature type="transmembrane region" description="Helical" evidence="2">
    <location>
        <begin position="288"/>
        <end position="308"/>
    </location>
</feature>
<feature type="transmembrane region" description="Helical" evidence="2">
    <location>
        <begin position="320"/>
        <end position="340"/>
    </location>
</feature>
<feature type="transmembrane region" description="Helical" evidence="2">
    <location>
        <begin position="347"/>
        <end position="367"/>
    </location>
</feature>
<feature type="binding site" description="axial binding residue" evidence="2">
    <location>
        <position position="83"/>
    </location>
    <ligand>
        <name>heme b</name>
        <dbReference type="ChEBI" id="CHEBI:60344"/>
        <label>b562</label>
    </ligand>
    <ligandPart>
        <name>Fe</name>
        <dbReference type="ChEBI" id="CHEBI:18248"/>
    </ligandPart>
</feature>
<feature type="binding site" description="axial binding residue" evidence="2">
    <location>
        <position position="97"/>
    </location>
    <ligand>
        <name>heme b</name>
        <dbReference type="ChEBI" id="CHEBI:60344"/>
        <label>b566</label>
    </ligand>
    <ligandPart>
        <name>Fe</name>
        <dbReference type="ChEBI" id="CHEBI:18248"/>
    </ligandPart>
</feature>
<feature type="binding site" description="axial binding residue" evidence="2">
    <location>
        <position position="182"/>
    </location>
    <ligand>
        <name>heme b</name>
        <dbReference type="ChEBI" id="CHEBI:60344"/>
        <label>b562</label>
    </ligand>
    <ligandPart>
        <name>Fe</name>
        <dbReference type="ChEBI" id="CHEBI:18248"/>
    </ligandPart>
</feature>
<feature type="binding site" description="axial binding residue" evidence="2">
    <location>
        <position position="196"/>
    </location>
    <ligand>
        <name>heme b</name>
        <dbReference type="ChEBI" id="CHEBI:60344"/>
        <label>b566</label>
    </ligand>
    <ligandPart>
        <name>Fe</name>
        <dbReference type="ChEBI" id="CHEBI:18248"/>
    </ligandPart>
</feature>
<feature type="binding site" evidence="2">
    <location>
        <position position="201"/>
    </location>
    <ligand>
        <name>a ubiquinone</name>
        <dbReference type="ChEBI" id="CHEBI:16389"/>
    </ligand>
</feature>
<feature type="sequence conflict" description="In Ref. 1; AAF97420." evidence="5" ref="1">
    <original>V</original>
    <variation>I</variation>
    <location>
        <position position="3"/>
    </location>
</feature>
<feature type="sequence conflict" description="In Ref. 1; AAF97420." evidence="5" ref="1">
    <original>I</original>
    <variation>V</variation>
    <location>
        <position position="118"/>
    </location>
</feature>
<feature type="sequence conflict" description="In Ref. 1; AAF97420." evidence="5" ref="1">
    <original>I</original>
    <variation>L</variation>
    <location>
        <position position="233"/>
    </location>
</feature>
<feature type="sequence conflict" description="In Ref. 1; AAF97420." evidence="5" ref="1">
    <original>L</original>
    <variation>F</variation>
    <location>
        <position position="299"/>
    </location>
</feature>
<feature type="sequence conflict" description="In Ref. 1; AAF97420." evidence="5" ref="1">
    <original>A</original>
    <variation>T</variation>
    <location>
        <position position="360"/>
    </location>
</feature>
<geneLocation type="mitochondrion"/>
<protein>
    <recommendedName>
        <fullName>Cytochrome b</fullName>
    </recommendedName>
    <alternativeName>
        <fullName>Complex III subunit 3</fullName>
    </alternativeName>
    <alternativeName>
        <fullName>Complex III subunit III</fullName>
    </alternativeName>
    <alternativeName>
        <fullName>Cytochrome b-c1 complex subunit 3</fullName>
    </alternativeName>
    <alternativeName>
        <fullName>Ubiquinol-cytochrome-c reductase complex cytochrome b subunit</fullName>
    </alternativeName>
</protein>
<keyword id="KW-0249">Electron transport</keyword>
<keyword id="KW-0349">Heme</keyword>
<keyword id="KW-0408">Iron</keyword>
<keyword id="KW-0472">Membrane</keyword>
<keyword id="KW-0479">Metal-binding</keyword>
<keyword id="KW-0496">Mitochondrion</keyword>
<keyword id="KW-0999">Mitochondrion inner membrane</keyword>
<keyword id="KW-0679">Respiratory chain</keyword>
<keyword id="KW-0812">Transmembrane</keyword>
<keyword id="KW-1133">Transmembrane helix</keyword>
<keyword id="KW-0813">Transport</keyword>
<keyword id="KW-0830">Ubiquinone</keyword>
<accession>Q953G9</accession>
<accession>Q9MI33</accession>
<name>CYB_ALEKI</name>
<dbReference type="EMBL" id="AF163896">
    <property type="protein sequence ID" value="AAF97420.1"/>
    <property type="molecule type" value="Genomic_DNA"/>
</dbReference>
<dbReference type="EMBL" id="AF348082">
    <property type="protein sequence ID" value="AAK71105.1"/>
    <property type="molecule type" value="Genomic_DNA"/>
</dbReference>
<dbReference type="SMR" id="Q953G9"/>
<dbReference type="CTD" id="4519"/>
<dbReference type="GO" id="GO:0005743">
    <property type="term" value="C:mitochondrial inner membrane"/>
    <property type="evidence" value="ECO:0007669"/>
    <property type="project" value="UniProtKB-SubCell"/>
</dbReference>
<dbReference type="GO" id="GO:0045275">
    <property type="term" value="C:respiratory chain complex III"/>
    <property type="evidence" value="ECO:0007669"/>
    <property type="project" value="InterPro"/>
</dbReference>
<dbReference type="GO" id="GO:0046872">
    <property type="term" value="F:metal ion binding"/>
    <property type="evidence" value="ECO:0007669"/>
    <property type="project" value="UniProtKB-KW"/>
</dbReference>
<dbReference type="GO" id="GO:0008121">
    <property type="term" value="F:ubiquinol-cytochrome-c reductase activity"/>
    <property type="evidence" value="ECO:0007669"/>
    <property type="project" value="InterPro"/>
</dbReference>
<dbReference type="GO" id="GO:0006122">
    <property type="term" value="P:mitochondrial electron transport, ubiquinol to cytochrome c"/>
    <property type="evidence" value="ECO:0007669"/>
    <property type="project" value="TreeGrafter"/>
</dbReference>
<dbReference type="CDD" id="cd00290">
    <property type="entry name" value="cytochrome_b_C"/>
    <property type="match status" value="1"/>
</dbReference>
<dbReference type="CDD" id="cd00284">
    <property type="entry name" value="Cytochrome_b_N"/>
    <property type="match status" value="1"/>
</dbReference>
<dbReference type="FunFam" id="1.20.810.10:FF:000002">
    <property type="entry name" value="Cytochrome b"/>
    <property type="match status" value="1"/>
</dbReference>
<dbReference type="Gene3D" id="1.20.810.10">
    <property type="entry name" value="Cytochrome Bc1 Complex, Chain C"/>
    <property type="match status" value="1"/>
</dbReference>
<dbReference type="InterPro" id="IPR005798">
    <property type="entry name" value="Cyt_b/b6_C"/>
</dbReference>
<dbReference type="InterPro" id="IPR036150">
    <property type="entry name" value="Cyt_b/b6_C_sf"/>
</dbReference>
<dbReference type="InterPro" id="IPR005797">
    <property type="entry name" value="Cyt_b/b6_N"/>
</dbReference>
<dbReference type="InterPro" id="IPR027387">
    <property type="entry name" value="Cytb/b6-like_sf"/>
</dbReference>
<dbReference type="InterPro" id="IPR030689">
    <property type="entry name" value="Cytochrome_b"/>
</dbReference>
<dbReference type="InterPro" id="IPR048260">
    <property type="entry name" value="Cytochrome_b_C_euk/bac"/>
</dbReference>
<dbReference type="InterPro" id="IPR048259">
    <property type="entry name" value="Cytochrome_b_N_euk/bac"/>
</dbReference>
<dbReference type="InterPro" id="IPR016174">
    <property type="entry name" value="Di-haem_cyt_TM"/>
</dbReference>
<dbReference type="PANTHER" id="PTHR19271">
    <property type="entry name" value="CYTOCHROME B"/>
    <property type="match status" value="1"/>
</dbReference>
<dbReference type="PANTHER" id="PTHR19271:SF16">
    <property type="entry name" value="CYTOCHROME B"/>
    <property type="match status" value="1"/>
</dbReference>
<dbReference type="Pfam" id="PF00032">
    <property type="entry name" value="Cytochrom_B_C"/>
    <property type="match status" value="1"/>
</dbReference>
<dbReference type="Pfam" id="PF00033">
    <property type="entry name" value="Cytochrome_B"/>
    <property type="match status" value="1"/>
</dbReference>
<dbReference type="PIRSF" id="PIRSF038885">
    <property type="entry name" value="COB"/>
    <property type="match status" value="1"/>
</dbReference>
<dbReference type="SUPFAM" id="SSF81648">
    <property type="entry name" value="a domain/subunit of cytochrome bc1 complex (Ubiquinol-cytochrome c reductase)"/>
    <property type="match status" value="1"/>
</dbReference>
<dbReference type="SUPFAM" id="SSF81342">
    <property type="entry name" value="Transmembrane di-heme cytochromes"/>
    <property type="match status" value="1"/>
</dbReference>
<dbReference type="PROSITE" id="PS51003">
    <property type="entry name" value="CYTB_CTER"/>
    <property type="match status" value="1"/>
</dbReference>
<dbReference type="PROSITE" id="PS51002">
    <property type="entry name" value="CYTB_NTER"/>
    <property type="match status" value="1"/>
</dbReference>
<proteinExistence type="inferred from homology"/>
<evidence type="ECO:0000250" key="1"/>
<evidence type="ECO:0000250" key="2">
    <source>
        <dbReference type="UniProtKB" id="P00157"/>
    </source>
</evidence>
<evidence type="ECO:0000255" key="3">
    <source>
        <dbReference type="PROSITE-ProRule" id="PRU00967"/>
    </source>
</evidence>
<evidence type="ECO:0000255" key="4">
    <source>
        <dbReference type="PROSITE-ProRule" id="PRU00968"/>
    </source>
</evidence>
<evidence type="ECO:0000305" key="5"/>
<reference key="1">
    <citation type="journal article" date="2000" name="J. Mammal.">
        <title>Molecular systematics of a holarctic rodent (Microtus, Muridae).</title>
        <authorList>
            <person name="Conroy C.J."/>
            <person name="Cook J.A."/>
        </authorList>
    </citation>
    <scope>NUCLEOTIDE SEQUENCE [GENOMIC DNA]</scope>
</reference>
<reference key="2">
    <citation type="journal article" date="2002" name="Gene">
        <title>Pika and vole mitochondrial genomes increase support for both rodent monophyly and glires.</title>
        <authorList>
            <person name="Lin Y.-H."/>
            <person name="Waddell P.J."/>
            <person name="Penny D."/>
        </authorList>
    </citation>
    <scope>NUCLEOTIDE SEQUENCE [GENOMIC DNA]</scope>
</reference>
<sequence length="380" mass="42845">MTVIRKKHPLIKMINHSFIDLPAPSNISSWWNFGSLLSLCLAVQILTGLFLAMHYTSDTSTAFSSVAHICRDVNYGWLIRYMHANGASMFFICLFLHVGRGVYYGSYNMIETWNMGIILLFAVMATAFMGYVLPWGQMSFWGATVITNLLSAIPYIGTTLVEWIWGGFSVDKATLTRFFAFHFILPFIITALVLVHLLFLHETGSNNPTGLNSDSDKIPFHPYYTIKDLLGVIILLMVFMILALFFPDILGDPDNYTPANPLNTPPHIKPEWYFLFAYAILRSIPNKLGGVLALILSILILALMPLLHTSKQRTLTFRPITQTMYWILVADLFILTWIGGQPVEYPFIIIGQTASIAYFAIIVILMPIAGMIENNILNLD</sequence>